<reference key="1">
    <citation type="journal article" date="2006" name="J. Virol.">
        <title>Genome of invertebrate iridescent virus type 3 (mosquito iridescent virus).</title>
        <authorList>
            <person name="Delhon G."/>
            <person name="Tulman E.R."/>
            <person name="Afonso C.L."/>
            <person name="Lu Z."/>
            <person name="Becnel J.J."/>
            <person name="Moser B.A."/>
            <person name="Kutish G.F."/>
            <person name="Rock D.L."/>
        </authorList>
    </citation>
    <scope>NUCLEOTIDE SEQUENCE [LARGE SCALE GENOMIC DNA]</scope>
</reference>
<keyword id="KW-0378">Hydrolase</keyword>
<keyword id="KW-0460">Magnesium</keyword>
<keyword id="KW-0464">Manganese</keyword>
<keyword id="KW-0479">Metal-binding</keyword>
<keyword id="KW-1185">Reference proteome</keyword>
<name>080R_IIV3</name>
<organismHost>
    <name type="scientific">Aedes vexans</name>
    <name type="common">Inland floodwater mosquito</name>
    <name type="synonym">Culex vexans</name>
    <dbReference type="NCBI Taxonomy" id="7163"/>
</organismHost>
<organismHost>
    <name type="scientific">Culex territans</name>
    <dbReference type="NCBI Taxonomy" id="42431"/>
</organismHost>
<organismHost>
    <name type="scientific">Culiseta annulata</name>
    <dbReference type="NCBI Taxonomy" id="332058"/>
</organismHost>
<organismHost>
    <name type="scientific">Ochlerotatus sollicitans</name>
    <name type="common">eastern saltmarsh mosquito</name>
    <dbReference type="NCBI Taxonomy" id="310513"/>
</organismHost>
<organismHost>
    <name type="scientific">Ochlerotatus taeniorhynchus</name>
    <name type="common">Black salt marsh mosquito</name>
    <name type="synonym">Aedes taeniorhynchus</name>
    <dbReference type="NCBI Taxonomy" id="329105"/>
</organismHost>
<organismHost>
    <name type="scientific">Psorophora ferox</name>
    <dbReference type="NCBI Taxonomy" id="7183"/>
</organismHost>
<feature type="chain" id="PRO_0000376928" description="Putative hydrolase 080R">
    <location>
        <begin position="1"/>
        <end position="241"/>
    </location>
</feature>
<feature type="domain" description="Nudix hydrolase" evidence="3">
    <location>
        <begin position="50"/>
        <end position="241"/>
    </location>
</feature>
<feature type="short sequence motif" description="Nudix box">
    <location>
        <begin position="136"/>
        <end position="157"/>
    </location>
</feature>
<feature type="binding site" evidence="1">
    <location>
        <position position="151"/>
    </location>
    <ligand>
        <name>Mg(2+)</name>
        <dbReference type="ChEBI" id="CHEBI:18420"/>
    </ligand>
</feature>
<feature type="binding site" evidence="1">
    <location>
        <position position="155"/>
    </location>
    <ligand>
        <name>Mg(2+)</name>
        <dbReference type="ChEBI" id="CHEBI:18420"/>
    </ligand>
</feature>
<feature type="binding site" evidence="2">
    <location>
        <position position="204"/>
    </location>
    <ligand>
        <name>Mg(2+)</name>
        <dbReference type="ChEBI" id="CHEBI:18420"/>
    </ligand>
</feature>
<gene>
    <name type="ORF">IIV3-080R</name>
</gene>
<organism>
    <name type="scientific">Invertebrate iridescent virus 3</name>
    <name type="common">IIV-3</name>
    <name type="synonym">Mosquito iridescent virus</name>
    <dbReference type="NCBI Taxonomy" id="345201"/>
    <lineage>
        <taxon>Viruses</taxon>
        <taxon>Varidnaviria</taxon>
        <taxon>Bamfordvirae</taxon>
        <taxon>Nucleocytoviricota</taxon>
        <taxon>Megaviricetes</taxon>
        <taxon>Pimascovirales</taxon>
        <taxon>Iridoviridae</taxon>
        <taxon>Betairidovirinae</taxon>
        <taxon>Chloriridovirus</taxon>
    </lineage>
</organism>
<protein>
    <recommendedName>
        <fullName>Putative hydrolase 080R</fullName>
        <ecNumber>3.6.1.-</ecNumber>
    </recommendedName>
</protein>
<evidence type="ECO:0000250" key="1"/>
<evidence type="ECO:0000255" key="2"/>
<evidence type="ECO:0000255" key="3">
    <source>
        <dbReference type="PROSITE-ProRule" id="PRU00794"/>
    </source>
</evidence>
<evidence type="ECO:0000305" key="4"/>
<accession>Q196Y0</accession>
<comment type="similarity">
    <text evidence="4">Belongs to the Nudix hydrolase family.</text>
</comment>
<sequence>MDNETSTPDIFQWCVSPFSKITLKRSMEQRDIVEFRIDATILRQIFHHGFPDLSFNLMVITTDRKVFLLERTESFHYPRVVERIKRGQECTKLVETLYQAERDAVRRLTAEADIVPLAAVKQDDDRPESIYIFPGGHCNGNEPVLSTLLREFREETTIPLKTTELRFHATKVYGIWIHDFAVGKTFKNFVFPVKINLSSAAIRDRFRETRHTRNPTFVDIGKSHRQSLLDLVIKVQKIMIL</sequence>
<dbReference type="EC" id="3.6.1.-"/>
<dbReference type="EMBL" id="DQ643392">
    <property type="protein sequence ID" value="ABF82110.1"/>
    <property type="molecule type" value="Genomic_DNA"/>
</dbReference>
<dbReference type="RefSeq" id="YP_654652.1">
    <property type="nucleotide sequence ID" value="NC_008187.1"/>
</dbReference>
<dbReference type="KEGG" id="vg:4156291"/>
<dbReference type="OrthoDB" id="20531at10239"/>
<dbReference type="Proteomes" id="UP000001358">
    <property type="component" value="Genome"/>
</dbReference>
<dbReference type="GO" id="GO:0016787">
    <property type="term" value="F:hydrolase activity"/>
    <property type="evidence" value="ECO:0007669"/>
    <property type="project" value="UniProtKB-KW"/>
</dbReference>
<dbReference type="GO" id="GO:0046872">
    <property type="term" value="F:metal ion binding"/>
    <property type="evidence" value="ECO:0007669"/>
    <property type="project" value="UniProtKB-KW"/>
</dbReference>
<dbReference type="Gene3D" id="3.90.79.10">
    <property type="entry name" value="Nucleoside Triphosphate Pyrophosphohydrolase"/>
    <property type="match status" value="1"/>
</dbReference>
<dbReference type="InterPro" id="IPR015797">
    <property type="entry name" value="NUDIX_hydrolase-like_dom_sf"/>
</dbReference>
<dbReference type="InterPro" id="IPR020084">
    <property type="entry name" value="NUDIX_hydrolase_CS"/>
</dbReference>
<dbReference type="InterPro" id="IPR000086">
    <property type="entry name" value="NUDIX_hydrolase_dom"/>
</dbReference>
<dbReference type="Pfam" id="PF00293">
    <property type="entry name" value="NUDIX"/>
    <property type="match status" value="1"/>
</dbReference>
<dbReference type="SUPFAM" id="SSF55811">
    <property type="entry name" value="Nudix"/>
    <property type="match status" value="1"/>
</dbReference>
<dbReference type="PROSITE" id="PS51462">
    <property type="entry name" value="NUDIX"/>
    <property type="match status" value="1"/>
</dbReference>
<dbReference type="PROSITE" id="PS00893">
    <property type="entry name" value="NUDIX_BOX"/>
    <property type="match status" value="1"/>
</dbReference>
<proteinExistence type="inferred from homology"/>